<accession>Q5M900</accession>
<organism>
    <name type="scientific">Xenopus tropicalis</name>
    <name type="common">Western clawed frog</name>
    <name type="synonym">Silurana tropicalis</name>
    <dbReference type="NCBI Taxonomy" id="8364"/>
    <lineage>
        <taxon>Eukaryota</taxon>
        <taxon>Metazoa</taxon>
        <taxon>Chordata</taxon>
        <taxon>Craniata</taxon>
        <taxon>Vertebrata</taxon>
        <taxon>Euteleostomi</taxon>
        <taxon>Amphibia</taxon>
        <taxon>Batrachia</taxon>
        <taxon>Anura</taxon>
        <taxon>Pipoidea</taxon>
        <taxon>Pipidae</taxon>
        <taxon>Xenopodinae</taxon>
        <taxon>Xenopus</taxon>
        <taxon>Silurana</taxon>
    </lineage>
</organism>
<proteinExistence type="evidence at transcript level"/>
<gene>
    <name type="primary">b3galnt2</name>
</gene>
<evidence type="ECO:0000250" key="1"/>
<evidence type="ECO:0000250" key="2">
    <source>
        <dbReference type="UniProtKB" id="Q8NCR0"/>
    </source>
</evidence>
<evidence type="ECO:0000255" key="3"/>
<evidence type="ECO:0000305" key="4"/>
<feature type="chain" id="PRO_0000248366" description="UDP-GalNAc:beta-1,3-N-acetylgalactosaminyltransferase 2">
    <location>
        <begin position="1"/>
        <end position="488"/>
    </location>
</feature>
<feature type="topological domain" description="Cytoplasmic" evidence="3">
    <location>
        <begin position="1"/>
        <end position="2"/>
    </location>
</feature>
<feature type="transmembrane region" description="Helical; Signal-anchor for type II membrane protein" evidence="3">
    <location>
        <begin position="3"/>
        <end position="23"/>
    </location>
</feature>
<feature type="topological domain" description="Lumenal" evidence="3">
    <location>
        <begin position="24"/>
        <end position="488"/>
    </location>
</feature>
<feature type="glycosylation site" description="N-linked (GlcNAc...) asparagine" evidence="3">
    <location>
        <position position="24"/>
    </location>
</feature>
<feature type="glycosylation site" description="N-linked (GlcNAc...) asparagine" evidence="3">
    <location>
        <position position="105"/>
    </location>
</feature>
<feature type="glycosylation site" description="N-linked (GlcNAc...) asparagine" evidence="3">
    <location>
        <position position="162"/>
    </location>
</feature>
<dbReference type="EC" id="2.4.1.313" evidence="2"/>
<dbReference type="EMBL" id="BC087761">
    <property type="protein sequence ID" value="AAH87761.1"/>
    <property type="molecule type" value="mRNA"/>
</dbReference>
<dbReference type="RefSeq" id="NP_001011210.1">
    <property type="nucleotide sequence ID" value="NM_001011210.1"/>
</dbReference>
<dbReference type="SMR" id="Q5M900"/>
<dbReference type="FunCoup" id="Q5M900">
    <property type="interactions" value="1045"/>
</dbReference>
<dbReference type="STRING" id="8364.ENSXETP00000046540"/>
<dbReference type="CAZy" id="GT31">
    <property type="family name" value="Glycosyltransferase Family 31"/>
</dbReference>
<dbReference type="GlyCosmos" id="Q5M900">
    <property type="glycosylation" value="3 sites, No reported glycans"/>
</dbReference>
<dbReference type="DNASU" id="496641"/>
<dbReference type="GeneID" id="496641"/>
<dbReference type="KEGG" id="xtr:496641"/>
<dbReference type="AGR" id="Xenbase:XB-GENE-1012156"/>
<dbReference type="CTD" id="148789"/>
<dbReference type="Xenbase" id="XB-GENE-1012156">
    <property type="gene designation" value="b3galnt2"/>
</dbReference>
<dbReference type="InParanoid" id="Q5M900"/>
<dbReference type="OMA" id="GKWAEHD"/>
<dbReference type="OrthoDB" id="2139606at2759"/>
<dbReference type="Reactome" id="R-XTR-5173105">
    <property type="pathway name" value="O-linked glycosylation"/>
</dbReference>
<dbReference type="UniPathway" id="UPA00378"/>
<dbReference type="Proteomes" id="UP000008143">
    <property type="component" value="Chromosome 5"/>
</dbReference>
<dbReference type="GO" id="GO:0005783">
    <property type="term" value="C:endoplasmic reticulum"/>
    <property type="evidence" value="ECO:0000250"/>
    <property type="project" value="UniProtKB"/>
</dbReference>
<dbReference type="GO" id="GO:0000139">
    <property type="term" value="C:Golgi membrane"/>
    <property type="evidence" value="ECO:0007669"/>
    <property type="project" value="UniProtKB-SubCell"/>
</dbReference>
<dbReference type="GO" id="GO:0008376">
    <property type="term" value="F:acetylgalactosaminyltransferase activity"/>
    <property type="evidence" value="ECO:0000250"/>
    <property type="project" value="UniProtKB"/>
</dbReference>
<dbReference type="GO" id="GO:0006486">
    <property type="term" value="P:protein glycosylation"/>
    <property type="evidence" value="ECO:0000250"/>
    <property type="project" value="UniProtKB"/>
</dbReference>
<dbReference type="GO" id="GO:0006493">
    <property type="term" value="P:protein O-linked glycosylation"/>
    <property type="evidence" value="ECO:0000250"/>
    <property type="project" value="UniProtKB"/>
</dbReference>
<dbReference type="FunFam" id="3.90.550.50:FF:000013">
    <property type="entry name" value="Hexosyltransferase"/>
    <property type="match status" value="1"/>
</dbReference>
<dbReference type="Gene3D" id="3.90.550.50">
    <property type="match status" value="1"/>
</dbReference>
<dbReference type="InterPro" id="IPR002659">
    <property type="entry name" value="Glyco_trans_31"/>
</dbReference>
<dbReference type="PANTHER" id="PTHR11214">
    <property type="entry name" value="BETA-1,3-N-ACETYLGLUCOSAMINYLTRANSFERASE"/>
    <property type="match status" value="1"/>
</dbReference>
<dbReference type="PANTHER" id="PTHR11214:SF219">
    <property type="entry name" value="UDP-GALNAC:BETA-1,3-N-ACETYLGALACTOSAMINYLTRANSFERASE 2"/>
    <property type="match status" value="1"/>
</dbReference>
<dbReference type="Pfam" id="PF01762">
    <property type="entry name" value="Galactosyl_T"/>
    <property type="match status" value="1"/>
</dbReference>
<reference key="1">
    <citation type="submission" date="2004-12" db="EMBL/GenBank/DDBJ databases">
        <authorList>
            <consortium name="NIH - Xenopus Gene Collection (XGC) project"/>
        </authorList>
    </citation>
    <scope>NUCLEOTIDE SEQUENCE [LARGE SCALE MRNA]</scope>
</reference>
<protein>
    <recommendedName>
        <fullName>UDP-GalNAc:beta-1,3-N-acetylgalactosaminyltransferase 2</fullName>
        <shortName>Beta-1,3-GalNAc-T2</shortName>
        <ecNumber evidence="2">2.4.1.313</ecNumber>
    </recommendedName>
    <alternativeName>
        <fullName>Beta-1,3-N-acetylgalactosaminyltransferase II</fullName>
    </alternativeName>
</protein>
<name>B3GL2_XENTR</name>
<comment type="function">
    <text evidence="1">Beta-1,3-N-acetylgalactosaminyltransferase that synthesizes a unique carbohydrate structure, GalNAc-beta-1-3GlcNAc, on N- and O-glycans. Has no galactose nor galactosaminyl transferase activity toward any acceptor substrate. Involved in alpha-dystroglycan (dag1) glycosylation (By similarity).</text>
</comment>
<comment type="catalytic activity">
    <reaction evidence="2">
        <text>3-O-(N-acetyl-beta-D-glucosaminyl-(1-&gt;4)-alpha-D-mannosyl)-L-threonyl-[protein] + UDP-N-acetyl-alpha-D-galactosamine = 3-O-[beta-D-GalNAc-(1-&gt;3)-beta-D-GlcNAc-(1-&gt;4)-alpha-D-Man]-L-Thr-[protein] + UDP + H(+)</text>
        <dbReference type="Rhea" id="RHEA:37667"/>
        <dbReference type="Rhea" id="RHEA-COMP:13308"/>
        <dbReference type="Rhea" id="RHEA-COMP:13618"/>
        <dbReference type="ChEBI" id="CHEBI:15378"/>
        <dbReference type="ChEBI" id="CHEBI:58223"/>
        <dbReference type="ChEBI" id="CHEBI:67138"/>
        <dbReference type="ChEBI" id="CHEBI:136709"/>
        <dbReference type="ChEBI" id="CHEBI:137540"/>
        <dbReference type="EC" id="2.4.1.313"/>
    </reaction>
</comment>
<comment type="pathway">
    <text>Protein modification; protein glycosylation.</text>
</comment>
<comment type="subcellular location">
    <subcellularLocation>
        <location evidence="1">Golgi apparatus membrane</location>
        <topology evidence="1">Single-pass type II membrane protein</topology>
    </subcellularLocation>
    <subcellularLocation>
        <location evidence="1">Endoplasmic reticulum</location>
    </subcellularLocation>
</comment>
<comment type="similarity">
    <text evidence="4">Belongs to the glycosyltransferase 31 family.</text>
</comment>
<sequence>MRHLLLLFLCPCAIGVAFHLWLFNFSGLFTWFPVWSQRSYDIVVGVLSARHNHELRNVIRHTWLQHLKQHSSLSQRILVKFIIGSHGCDIPVEDREDPYSCKLLNITNPTFKQEIESFSIPDIAALLTEHHVVNVNFRVLYPVVITRLGVFQHDSAAGFHRNITVKLFQTEHEEALFSARFSPASSGVQVNGIWYKPVEQFILPEGFEGTVVWESHDPEGLLSGNVHRVIVNDGGGIFRITTVKEGLLPYEFTEGVEGIAGGFTYTIHEGEALLNTLETRPERIQIHLAALEKEDALLQEESTTFQDIVFVHVVDTYRNVPSKLLNFYQWTAEFTSFEFLLKTDDDCFIDIENVLEKIAHKQLQKENTWWGNFRLNWAVDRTGKWQELEYLSPAYPAFACGSGYVISQDIVQWLASNSQRLKTYQGEDVSMGIWMSAIGPSRYQDSHWLCEKKCEAGMLSSPQYTPQELLELWQQKERCGNPCACEDR</sequence>
<keyword id="KW-0256">Endoplasmic reticulum</keyword>
<keyword id="KW-0325">Glycoprotein</keyword>
<keyword id="KW-0328">Glycosyltransferase</keyword>
<keyword id="KW-0333">Golgi apparatus</keyword>
<keyword id="KW-0472">Membrane</keyword>
<keyword id="KW-1185">Reference proteome</keyword>
<keyword id="KW-0735">Signal-anchor</keyword>
<keyword id="KW-0808">Transferase</keyword>
<keyword id="KW-0812">Transmembrane</keyword>
<keyword id="KW-1133">Transmembrane helix</keyword>